<keyword id="KW-0378">Hydrolase</keyword>
<keyword id="KW-0574">Periplasm</keyword>
<keyword id="KW-0732">Signal</keyword>
<name>PHON_SALTI</name>
<reference key="1">
    <citation type="submission" date="2001-03" db="EMBL/GenBank/DDBJ databases">
        <title>phoN, a gene for acid phosphatase from Salmonella typhi.</title>
        <authorList>
            <person name="Rao A.S."/>
            <person name="Mukhopadhyaya R."/>
            <person name="Mahajan S.K."/>
        </authorList>
    </citation>
    <scope>NUCLEOTIDE SEQUENCE [GENOMIC DNA]</scope>
</reference>
<reference key="2">
    <citation type="journal article" date="2001" name="Nature">
        <title>Complete genome sequence of a multiple drug resistant Salmonella enterica serovar Typhi CT18.</title>
        <authorList>
            <person name="Parkhill J."/>
            <person name="Dougan G."/>
            <person name="James K.D."/>
            <person name="Thomson N.R."/>
            <person name="Pickard D."/>
            <person name="Wain J."/>
            <person name="Churcher C.M."/>
            <person name="Mungall K.L."/>
            <person name="Bentley S.D."/>
            <person name="Holden M.T.G."/>
            <person name="Sebaihia M."/>
            <person name="Baker S."/>
            <person name="Basham D."/>
            <person name="Brooks K."/>
            <person name="Chillingworth T."/>
            <person name="Connerton P."/>
            <person name="Cronin A."/>
            <person name="Davis P."/>
            <person name="Davies R.M."/>
            <person name="Dowd L."/>
            <person name="White N."/>
            <person name="Farrar J."/>
            <person name="Feltwell T."/>
            <person name="Hamlin N."/>
            <person name="Haque A."/>
            <person name="Hien T.T."/>
            <person name="Holroyd S."/>
            <person name="Jagels K."/>
            <person name="Krogh A."/>
            <person name="Larsen T.S."/>
            <person name="Leather S."/>
            <person name="Moule S."/>
            <person name="O'Gaora P."/>
            <person name="Parry C."/>
            <person name="Quail M.A."/>
            <person name="Rutherford K.M."/>
            <person name="Simmonds M."/>
            <person name="Skelton J."/>
            <person name="Stevens K."/>
            <person name="Whitehead S."/>
            <person name="Barrell B.G."/>
        </authorList>
    </citation>
    <scope>NUCLEOTIDE SEQUENCE [LARGE SCALE GENOMIC DNA]</scope>
    <source>
        <strain>CT18</strain>
    </source>
</reference>
<reference key="3">
    <citation type="journal article" date="2003" name="J. Bacteriol.">
        <title>Comparative genomics of Salmonella enterica serovar Typhi strains Ty2 and CT18.</title>
        <authorList>
            <person name="Deng W."/>
            <person name="Liou S.-R."/>
            <person name="Plunkett G. III"/>
            <person name="Mayhew G.F."/>
            <person name="Rose D.J."/>
            <person name="Burland V."/>
            <person name="Kodoyianni V."/>
            <person name="Schwartz D.C."/>
            <person name="Blattner F.R."/>
        </authorList>
    </citation>
    <scope>NUCLEOTIDE SEQUENCE [LARGE SCALE GENOMIC DNA]</scope>
    <source>
        <strain>ATCC 700931 / Ty2</strain>
    </source>
</reference>
<proteinExistence type="inferred from homology"/>
<gene>
    <name type="primary">phoN</name>
    <name type="ordered locus">STY4519</name>
    <name type="ordered locus">t4225</name>
</gene>
<accession>Q934J6</accession>
<organism>
    <name type="scientific">Salmonella typhi</name>
    <dbReference type="NCBI Taxonomy" id="90370"/>
    <lineage>
        <taxon>Bacteria</taxon>
        <taxon>Pseudomonadati</taxon>
        <taxon>Pseudomonadota</taxon>
        <taxon>Gammaproteobacteria</taxon>
        <taxon>Enterobacterales</taxon>
        <taxon>Enterobacteriaceae</taxon>
        <taxon>Salmonella</taxon>
    </lineage>
</organism>
<sequence length="250" mass="28459">MKSRYLLFFLPLIVAKYTSAATMQPFHSPEESVNSQFYLPPPPGNDDPAFRYDKEAYFKGYAIKGSPRWKQAAEDADISVENIARIFSPVVGAKINPKDTPETWNMLQNLLKMGGYYATASAKKYYMRTRPFVLFNHSTCRPEDENTLRKDGSYPSGHTAYSTLLALVLSQARPERAQELARRGWEFGQSRVICGAHWQSDVDAGRYVGAVEFARLQTIPAFQKSLAKVREELNDKNNLLSKEERPELNY</sequence>
<protein>
    <recommendedName>
        <fullName>Non-specific acid phosphatase</fullName>
        <shortName>NSAP</shortName>
        <ecNumber>3.1.3.2</ecNumber>
    </recommendedName>
</protein>
<evidence type="ECO:0000250" key="1"/>
<evidence type="ECO:0000255" key="2"/>
<evidence type="ECO:0000305" key="3"/>
<comment type="catalytic activity">
    <reaction>
        <text>a phosphate monoester + H2O = an alcohol + phosphate</text>
        <dbReference type="Rhea" id="RHEA:15017"/>
        <dbReference type="ChEBI" id="CHEBI:15377"/>
        <dbReference type="ChEBI" id="CHEBI:30879"/>
        <dbReference type="ChEBI" id="CHEBI:43474"/>
        <dbReference type="ChEBI" id="CHEBI:67140"/>
        <dbReference type="EC" id="3.1.3.2"/>
    </reaction>
</comment>
<comment type="subunit">
    <text evidence="1">Homodimer.</text>
</comment>
<comment type="subcellular location">
    <subcellularLocation>
        <location evidence="1">Periplasm</location>
    </subcellularLocation>
</comment>
<comment type="similarity">
    <text evidence="3">Belongs to the class A bacterial acid phosphatase family.</text>
</comment>
<feature type="signal peptide" evidence="2">
    <location>
        <begin position="1"/>
        <end position="20"/>
    </location>
</feature>
<feature type="chain" id="PRO_0000024001" description="Non-specific acid phosphatase">
    <location>
        <begin position="21"/>
        <end position="250"/>
    </location>
</feature>
<dbReference type="EC" id="3.1.3.2"/>
<dbReference type="EMBL" id="AF366353">
    <property type="protein sequence ID" value="AAK50861.1"/>
    <property type="molecule type" value="Genomic_DNA"/>
</dbReference>
<dbReference type="EMBL" id="AL513382">
    <property type="protein sequence ID" value="CAD09303.1"/>
    <property type="molecule type" value="Genomic_DNA"/>
</dbReference>
<dbReference type="EMBL" id="AE014613">
    <property type="protein sequence ID" value="AAO71687.1"/>
    <property type="molecule type" value="Genomic_DNA"/>
</dbReference>
<dbReference type="RefSeq" id="NP_458615.1">
    <property type="nucleotide sequence ID" value="NC_003198.1"/>
</dbReference>
<dbReference type="RefSeq" id="WP_001785756.1">
    <property type="nucleotide sequence ID" value="NZ_WSUR01000022.1"/>
</dbReference>
<dbReference type="SMR" id="Q934J6"/>
<dbReference type="STRING" id="220341.gene:17588347"/>
<dbReference type="KEGG" id="stt:t4225"/>
<dbReference type="KEGG" id="sty:STY4519"/>
<dbReference type="PATRIC" id="fig|220341.7.peg.4623"/>
<dbReference type="eggNOG" id="COG0671">
    <property type="taxonomic scope" value="Bacteria"/>
</dbReference>
<dbReference type="HOGENOM" id="CLU_079861_0_0_6"/>
<dbReference type="OMA" id="PICVART"/>
<dbReference type="OrthoDB" id="9805301at2"/>
<dbReference type="Proteomes" id="UP000000541">
    <property type="component" value="Chromosome"/>
</dbReference>
<dbReference type="Proteomes" id="UP000002670">
    <property type="component" value="Chromosome"/>
</dbReference>
<dbReference type="GO" id="GO:0030288">
    <property type="term" value="C:outer membrane-bounded periplasmic space"/>
    <property type="evidence" value="ECO:0007669"/>
    <property type="project" value="InterPro"/>
</dbReference>
<dbReference type="GO" id="GO:0003993">
    <property type="term" value="F:acid phosphatase activity"/>
    <property type="evidence" value="ECO:0007669"/>
    <property type="project" value="UniProtKB-EC"/>
</dbReference>
<dbReference type="CDD" id="cd03397">
    <property type="entry name" value="PAP2_acid_phosphatase"/>
    <property type="match status" value="1"/>
</dbReference>
<dbReference type="Gene3D" id="1.20.144.10">
    <property type="entry name" value="Phosphatidic acid phosphatase type 2/haloperoxidase"/>
    <property type="match status" value="1"/>
</dbReference>
<dbReference type="InterPro" id="IPR001011">
    <property type="entry name" value="Acid_Pase_classA_bac"/>
</dbReference>
<dbReference type="InterPro" id="IPR018296">
    <property type="entry name" value="Acid_Pase_classA_bac_CS"/>
</dbReference>
<dbReference type="InterPro" id="IPR036938">
    <property type="entry name" value="P_Acid_Pase_2/haloperoxi_sf"/>
</dbReference>
<dbReference type="InterPro" id="IPR000326">
    <property type="entry name" value="P_Acid_Pase_2/haloperoxidase"/>
</dbReference>
<dbReference type="Pfam" id="PF01569">
    <property type="entry name" value="PAP2"/>
    <property type="match status" value="1"/>
</dbReference>
<dbReference type="PIRSF" id="PIRSF000897">
    <property type="entry name" value="Acid_Ptase_ClsA"/>
    <property type="match status" value="1"/>
</dbReference>
<dbReference type="PRINTS" id="PR00483">
    <property type="entry name" value="BACPHPHTASE"/>
</dbReference>
<dbReference type="SMART" id="SM00014">
    <property type="entry name" value="acidPPc"/>
    <property type="match status" value="1"/>
</dbReference>
<dbReference type="SUPFAM" id="SSF48317">
    <property type="entry name" value="Acid phosphatase/Vanadium-dependent haloperoxidase"/>
    <property type="match status" value="1"/>
</dbReference>
<dbReference type="PROSITE" id="PS01157">
    <property type="entry name" value="ACID_PHOSPH_CL_A"/>
    <property type="match status" value="1"/>
</dbReference>